<feature type="chain" id="PRO_0000391892" description="E3 UFM1-protein ligase 1 homolog">
    <location>
        <begin position="1"/>
        <end position="747"/>
    </location>
</feature>
<feature type="region of interest" description="Disordered" evidence="2">
    <location>
        <begin position="403"/>
        <end position="468"/>
    </location>
</feature>
<feature type="compositionally biased region" description="Basic residues" evidence="2">
    <location>
        <begin position="429"/>
        <end position="438"/>
    </location>
</feature>
<feature type="compositionally biased region" description="Gly residues" evidence="2">
    <location>
        <begin position="439"/>
        <end position="449"/>
    </location>
</feature>
<feature type="compositionally biased region" description="Polar residues" evidence="2">
    <location>
        <begin position="450"/>
        <end position="465"/>
    </location>
</feature>
<keyword id="KW-1185">Reference proteome</keyword>
<keyword id="KW-0808">Transferase</keyword>
<keyword id="KW-0833">Ubl conjugation pathway</keyword>
<dbReference type="EC" id="2.3.2.-" evidence="1"/>
<dbReference type="EMBL" id="HE600968">
    <property type="protein sequence ID" value="CAP21869.2"/>
    <property type="molecule type" value="Genomic_DNA"/>
</dbReference>
<dbReference type="SMR" id="A8WN14"/>
<dbReference type="FunCoup" id="A8WN14">
    <property type="interactions" value="2767"/>
</dbReference>
<dbReference type="STRING" id="6238.A8WN14"/>
<dbReference type="WormBase" id="CBG00415">
    <property type="protein sequence ID" value="CBP37980"/>
    <property type="gene ID" value="WBGene00023806"/>
    <property type="gene designation" value="Cbr-ufl-1"/>
</dbReference>
<dbReference type="eggNOG" id="KOG2235">
    <property type="taxonomic scope" value="Eukaryota"/>
</dbReference>
<dbReference type="HOGENOM" id="CLU_422267_0_0_1"/>
<dbReference type="InParanoid" id="A8WN14"/>
<dbReference type="OMA" id="FPKDFWA"/>
<dbReference type="Proteomes" id="UP000008549">
    <property type="component" value="Unassembled WGS sequence"/>
</dbReference>
<dbReference type="GO" id="GO:0005789">
    <property type="term" value="C:endoplasmic reticulum membrane"/>
    <property type="evidence" value="ECO:0000318"/>
    <property type="project" value="GO_Central"/>
</dbReference>
<dbReference type="GO" id="GO:0061666">
    <property type="term" value="F:UFM1 ligase activity"/>
    <property type="evidence" value="ECO:0007669"/>
    <property type="project" value="InterPro"/>
</dbReference>
<dbReference type="GO" id="GO:0071568">
    <property type="term" value="F:UFM1 transferase activity"/>
    <property type="evidence" value="ECO:0000318"/>
    <property type="project" value="GO_Central"/>
</dbReference>
<dbReference type="GO" id="GO:0032088">
    <property type="term" value="P:negative regulation of NF-kappaB transcription factor activity"/>
    <property type="evidence" value="ECO:0000250"/>
    <property type="project" value="UniProtKB"/>
</dbReference>
<dbReference type="GO" id="GO:0071569">
    <property type="term" value="P:protein ufmylation"/>
    <property type="evidence" value="ECO:0007669"/>
    <property type="project" value="InterPro"/>
</dbReference>
<dbReference type="GO" id="GO:0034976">
    <property type="term" value="P:response to endoplasmic reticulum stress"/>
    <property type="evidence" value="ECO:0000318"/>
    <property type="project" value="GO_Central"/>
</dbReference>
<dbReference type="GO" id="GO:0061709">
    <property type="term" value="P:reticulophagy"/>
    <property type="evidence" value="ECO:0000318"/>
    <property type="project" value="GO_Central"/>
</dbReference>
<dbReference type="InterPro" id="IPR018611">
    <property type="entry name" value="Ufl1"/>
</dbReference>
<dbReference type="InterPro" id="IPR056761">
    <property type="entry name" value="Ufl1-like_C"/>
</dbReference>
<dbReference type="InterPro" id="IPR056580">
    <property type="entry name" value="Ufl1_dom"/>
</dbReference>
<dbReference type="InterPro" id="IPR056579">
    <property type="entry name" value="Ufl1_N"/>
</dbReference>
<dbReference type="PANTHER" id="PTHR31057">
    <property type="entry name" value="E3 UFM1-PROTEIN LIGASE 1"/>
    <property type="match status" value="1"/>
</dbReference>
<dbReference type="PANTHER" id="PTHR31057:SF0">
    <property type="entry name" value="E3 UFM1-PROTEIN LIGASE 1"/>
    <property type="match status" value="1"/>
</dbReference>
<dbReference type="Pfam" id="PF09743">
    <property type="entry name" value="E3_UFM1_ligase"/>
    <property type="match status" value="1"/>
</dbReference>
<dbReference type="Pfam" id="PF23659">
    <property type="entry name" value="UFL1"/>
    <property type="match status" value="1"/>
</dbReference>
<dbReference type="Pfam" id="PF25041">
    <property type="entry name" value="UFL1_C"/>
    <property type="match status" value="1"/>
</dbReference>
<name>UFL1_CAEBR</name>
<comment type="function">
    <text evidence="1">E3 UFM1-protein ligase that mediates ufmylation of target proteins.</text>
</comment>
<comment type="similarity">
    <text evidence="3">Belongs to the UFL1 family.</text>
</comment>
<evidence type="ECO:0000250" key="1">
    <source>
        <dbReference type="UniProtKB" id="O94874"/>
    </source>
</evidence>
<evidence type="ECO:0000256" key="2">
    <source>
        <dbReference type="SAM" id="MobiDB-lite"/>
    </source>
</evidence>
<evidence type="ECO:0000305" key="3"/>
<accession>A8WN14</accession>
<sequence length="747" mass="81728">MTSWADIQKLASDLQRVQLTQSSKKLSEVNCIEVLQKLIASQQIDVVYTRDGHTYVTKKHLETEIKNECVAAGGRAPLTDIAVALNIDFDHIERTARLIVSSDDEFTLSNAELFATGYSLCRTKISISVNTCIASATNFALFSMNKSLLIEKLSSTDFEGVVDGDTIYTSSFLDARQLVLRAVLVALTKVTPISTIQKRVGLTPKRFWIAFENLQALGEVPGTLIGSRTSPACSYRPKMYDYLVKTCVTNQYRQNEFLQMSTLKTLGLDSKTALEEVLGASEVKKLVNLNSIYMSKELMEQCVQTVQGEARNITLNTDYIVFVPDDIQNSGIAEIRMSLQTLNLPLDTADEDLIGEKIASTEKDTNFSDGFVYNNSILTEALKSINTQIEAKAHQEVEKIDVEKKKQCGSKAPAKVQEDTDDWGDNKKGGKGGKKGGKGGKNGGGGGKGATSSVPTGSGTVQVNSEELEEWLRESQTVPEEILTVVVETLHQDATSALRKQVQEIQALQLVVNAANSKKSLSAIGDKCRQLYDSFNTFEAGTTSFADPLGTDLRQYLLKTVGVDLACAILSYAIGIDNVHQLKEKQRDETIESLPEMVREPIRALFASLKSTDEDAVEKFHDAVYDCSVPSATSLSLRKIDKKGRAEVGVKVSADLCDQLASQSDPATTLLLSVLYLFSQAGRPTTASGKFVAQLIAQMKDFCPTNTFELLQSCQKGVVTCIKNQDDDVAKEILSEDIEKLKSAVLQ</sequence>
<protein>
    <recommendedName>
        <fullName>E3 UFM1-protein ligase 1 homolog</fullName>
        <ecNumber evidence="1">2.3.2.-</ecNumber>
    </recommendedName>
    <alternativeName>
        <fullName evidence="3">E3 UFM1-protein transferase 1 homolog</fullName>
    </alternativeName>
</protein>
<proteinExistence type="inferred from homology"/>
<gene>
    <name type="primary">ufl-1</name>
    <name type="ORF">CBG00415</name>
</gene>
<reference key="1">
    <citation type="journal article" date="2003" name="PLoS Biol.">
        <title>The genome sequence of Caenorhabditis briggsae: a platform for comparative genomics.</title>
        <authorList>
            <person name="Stein L.D."/>
            <person name="Bao Z."/>
            <person name="Blasiar D."/>
            <person name="Blumenthal T."/>
            <person name="Brent M.R."/>
            <person name="Chen N."/>
            <person name="Chinwalla A."/>
            <person name="Clarke L."/>
            <person name="Clee C."/>
            <person name="Coghlan A."/>
            <person name="Coulson A."/>
            <person name="D'Eustachio P."/>
            <person name="Fitch D.H.A."/>
            <person name="Fulton L.A."/>
            <person name="Fulton R.E."/>
            <person name="Griffiths-Jones S."/>
            <person name="Harris T.W."/>
            <person name="Hillier L.W."/>
            <person name="Kamath R."/>
            <person name="Kuwabara P.E."/>
            <person name="Mardis E.R."/>
            <person name="Marra M.A."/>
            <person name="Miner T.L."/>
            <person name="Minx P."/>
            <person name="Mullikin J.C."/>
            <person name="Plumb R.W."/>
            <person name="Rogers J."/>
            <person name="Schein J.E."/>
            <person name="Sohrmann M."/>
            <person name="Spieth J."/>
            <person name="Stajich J.E."/>
            <person name="Wei C."/>
            <person name="Willey D."/>
            <person name="Wilson R.K."/>
            <person name="Durbin R.M."/>
            <person name="Waterston R.H."/>
        </authorList>
    </citation>
    <scope>NUCLEOTIDE SEQUENCE [LARGE SCALE GENOMIC DNA]</scope>
    <source>
        <strain>AF16</strain>
    </source>
</reference>
<organism>
    <name type="scientific">Caenorhabditis briggsae</name>
    <dbReference type="NCBI Taxonomy" id="6238"/>
    <lineage>
        <taxon>Eukaryota</taxon>
        <taxon>Metazoa</taxon>
        <taxon>Ecdysozoa</taxon>
        <taxon>Nematoda</taxon>
        <taxon>Chromadorea</taxon>
        <taxon>Rhabditida</taxon>
        <taxon>Rhabditina</taxon>
        <taxon>Rhabditomorpha</taxon>
        <taxon>Rhabditoidea</taxon>
        <taxon>Rhabditidae</taxon>
        <taxon>Peloderinae</taxon>
        <taxon>Caenorhabditis</taxon>
    </lineage>
</organism>